<proteinExistence type="inferred from homology"/>
<evidence type="ECO:0000255" key="1">
    <source>
        <dbReference type="HAMAP-Rule" id="MF_01310"/>
    </source>
</evidence>
<evidence type="ECO:0000305" key="2"/>
<name>RS11_HYDCU</name>
<gene>
    <name evidence="1" type="primary">rpsK</name>
    <name type="ordered locus">Tcr_0317</name>
</gene>
<protein>
    <recommendedName>
        <fullName evidence="1">Small ribosomal subunit protein uS11</fullName>
    </recommendedName>
    <alternativeName>
        <fullName evidence="2">30S ribosomal protein S11</fullName>
    </alternativeName>
</protein>
<sequence length="129" mass="13678">MAKANSRVKKKAKQVVTDAVAHVHATFNNTIVTITDRQGNALCWATSGGSGFRGSRKSTPFAAQVAAERAGQMATEYGVKNMDVMVKGPGPGRDSAVRGLNSVGFKITSISDVTPIPHNGCRPPKKRRV</sequence>
<dbReference type="EMBL" id="CP000109">
    <property type="protein sequence ID" value="ABB40913.1"/>
    <property type="molecule type" value="Genomic_DNA"/>
</dbReference>
<dbReference type="SMR" id="Q31IW0"/>
<dbReference type="STRING" id="317025.Tcr_0317"/>
<dbReference type="KEGG" id="tcx:Tcr_0317"/>
<dbReference type="eggNOG" id="COG0100">
    <property type="taxonomic scope" value="Bacteria"/>
</dbReference>
<dbReference type="HOGENOM" id="CLU_072439_5_0_6"/>
<dbReference type="OrthoDB" id="9806415at2"/>
<dbReference type="GO" id="GO:1990904">
    <property type="term" value="C:ribonucleoprotein complex"/>
    <property type="evidence" value="ECO:0007669"/>
    <property type="project" value="UniProtKB-KW"/>
</dbReference>
<dbReference type="GO" id="GO:0005840">
    <property type="term" value="C:ribosome"/>
    <property type="evidence" value="ECO:0007669"/>
    <property type="project" value="UniProtKB-KW"/>
</dbReference>
<dbReference type="GO" id="GO:0019843">
    <property type="term" value="F:rRNA binding"/>
    <property type="evidence" value="ECO:0007669"/>
    <property type="project" value="UniProtKB-UniRule"/>
</dbReference>
<dbReference type="GO" id="GO:0003735">
    <property type="term" value="F:structural constituent of ribosome"/>
    <property type="evidence" value="ECO:0007669"/>
    <property type="project" value="InterPro"/>
</dbReference>
<dbReference type="GO" id="GO:0006412">
    <property type="term" value="P:translation"/>
    <property type="evidence" value="ECO:0007669"/>
    <property type="project" value="UniProtKB-UniRule"/>
</dbReference>
<dbReference type="FunFam" id="3.30.420.80:FF:000001">
    <property type="entry name" value="30S ribosomal protein S11"/>
    <property type="match status" value="1"/>
</dbReference>
<dbReference type="Gene3D" id="3.30.420.80">
    <property type="entry name" value="Ribosomal protein S11"/>
    <property type="match status" value="1"/>
</dbReference>
<dbReference type="HAMAP" id="MF_01310">
    <property type="entry name" value="Ribosomal_uS11"/>
    <property type="match status" value="1"/>
</dbReference>
<dbReference type="InterPro" id="IPR001971">
    <property type="entry name" value="Ribosomal_uS11"/>
</dbReference>
<dbReference type="InterPro" id="IPR019981">
    <property type="entry name" value="Ribosomal_uS11_bac-type"/>
</dbReference>
<dbReference type="InterPro" id="IPR018102">
    <property type="entry name" value="Ribosomal_uS11_CS"/>
</dbReference>
<dbReference type="InterPro" id="IPR036967">
    <property type="entry name" value="Ribosomal_uS11_sf"/>
</dbReference>
<dbReference type="NCBIfam" id="NF003698">
    <property type="entry name" value="PRK05309.1"/>
    <property type="match status" value="1"/>
</dbReference>
<dbReference type="NCBIfam" id="TIGR03632">
    <property type="entry name" value="uS11_bact"/>
    <property type="match status" value="1"/>
</dbReference>
<dbReference type="PANTHER" id="PTHR11759">
    <property type="entry name" value="40S RIBOSOMAL PROTEIN S14/30S RIBOSOMAL PROTEIN S11"/>
    <property type="match status" value="1"/>
</dbReference>
<dbReference type="Pfam" id="PF00411">
    <property type="entry name" value="Ribosomal_S11"/>
    <property type="match status" value="1"/>
</dbReference>
<dbReference type="PIRSF" id="PIRSF002131">
    <property type="entry name" value="Ribosomal_S11"/>
    <property type="match status" value="1"/>
</dbReference>
<dbReference type="SUPFAM" id="SSF53137">
    <property type="entry name" value="Translational machinery components"/>
    <property type="match status" value="1"/>
</dbReference>
<dbReference type="PROSITE" id="PS00054">
    <property type="entry name" value="RIBOSOMAL_S11"/>
    <property type="match status" value="1"/>
</dbReference>
<keyword id="KW-0687">Ribonucleoprotein</keyword>
<keyword id="KW-0689">Ribosomal protein</keyword>
<keyword id="KW-0694">RNA-binding</keyword>
<keyword id="KW-0699">rRNA-binding</keyword>
<organism>
    <name type="scientific">Hydrogenovibrio crunogenus (strain DSM 25203 / XCL-2)</name>
    <name type="common">Thiomicrospira crunogena</name>
    <dbReference type="NCBI Taxonomy" id="317025"/>
    <lineage>
        <taxon>Bacteria</taxon>
        <taxon>Pseudomonadati</taxon>
        <taxon>Pseudomonadota</taxon>
        <taxon>Gammaproteobacteria</taxon>
        <taxon>Thiotrichales</taxon>
        <taxon>Piscirickettsiaceae</taxon>
        <taxon>Hydrogenovibrio</taxon>
    </lineage>
</organism>
<reference key="1">
    <citation type="journal article" date="2006" name="PLoS Biol.">
        <title>The genome of deep-sea vent chemolithoautotroph Thiomicrospira crunogena XCL-2.</title>
        <authorList>
            <person name="Scott K.M."/>
            <person name="Sievert S.M."/>
            <person name="Abril F.N."/>
            <person name="Ball L.A."/>
            <person name="Barrett C.J."/>
            <person name="Blake R.A."/>
            <person name="Boller A.J."/>
            <person name="Chain P.S.G."/>
            <person name="Clark J.A."/>
            <person name="Davis C.R."/>
            <person name="Detter C."/>
            <person name="Do K.F."/>
            <person name="Dobrinski K.P."/>
            <person name="Faza B.I."/>
            <person name="Fitzpatrick K.A."/>
            <person name="Freyermuth S.K."/>
            <person name="Harmer T.L."/>
            <person name="Hauser L.J."/>
            <person name="Huegler M."/>
            <person name="Kerfeld C.A."/>
            <person name="Klotz M.G."/>
            <person name="Kong W.W."/>
            <person name="Land M."/>
            <person name="Lapidus A."/>
            <person name="Larimer F.W."/>
            <person name="Longo D.L."/>
            <person name="Lucas S."/>
            <person name="Malfatti S.A."/>
            <person name="Massey S.E."/>
            <person name="Martin D.D."/>
            <person name="McCuddin Z."/>
            <person name="Meyer F."/>
            <person name="Moore J.L."/>
            <person name="Ocampo L.H. Jr."/>
            <person name="Paul J.H."/>
            <person name="Paulsen I.T."/>
            <person name="Reep D.K."/>
            <person name="Ren Q."/>
            <person name="Ross R.L."/>
            <person name="Sato P.Y."/>
            <person name="Thomas P."/>
            <person name="Tinkham L.E."/>
            <person name="Zeruth G.T."/>
        </authorList>
    </citation>
    <scope>NUCLEOTIDE SEQUENCE [LARGE SCALE GENOMIC DNA]</scope>
    <source>
        <strain>DSM 25203 / XCL-2</strain>
    </source>
</reference>
<feature type="chain" id="PRO_0000230439" description="Small ribosomal subunit protein uS11">
    <location>
        <begin position="1"/>
        <end position="129"/>
    </location>
</feature>
<comment type="function">
    <text evidence="1">Located on the platform of the 30S subunit, it bridges several disparate RNA helices of the 16S rRNA. Forms part of the Shine-Dalgarno cleft in the 70S ribosome.</text>
</comment>
<comment type="subunit">
    <text evidence="1">Part of the 30S ribosomal subunit. Interacts with proteins S7 and S18. Binds to IF-3.</text>
</comment>
<comment type="similarity">
    <text evidence="1">Belongs to the universal ribosomal protein uS11 family.</text>
</comment>
<accession>Q31IW0</accession>